<sequence>MNIKSIKDLDLKPGNSVFIRCDFNVPLDEYGNITDDRRIREALPTIRYCLDNDCKIVLGSHLGRPKGFDEKYSLKPVAKRLHTLLKQDIIMAQDVVGEDAKAKFTKLQPGEILLLENLRFEPGETKNDEEFAKKLSQFGEFYVNDAFGVSHRAHASVEAITRFYDQDHKAAGFLLLKEIKYLYKILENPTRPFMAIVGGSKVSGKLGALINLLPKVDKLIIGGAMAFTFLKALGYEVGKSLVEDDLIEEAKNILNQAKNNGVKLYLPVDFVVAPELDPNAPVKYVTFQEIPKTWMGLDIGPASTRLFKEALDEVQTIIWNGPMGVFEIDKFARGSIKLANFVAESFATKIIGGGDTASLISKAGVVDEMTFISTGGGASLELLEGKELPGIKALEVGAS</sequence>
<feature type="chain" id="PRO_1000009638" description="Phosphoglycerate kinase">
    <location>
        <begin position="1"/>
        <end position="399"/>
    </location>
</feature>
<feature type="binding site" evidence="1">
    <location>
        <begin position="22"/>
        <end position="24"/>
    </location>
    <ligand>
        <name>substrate</name>
    </ligand>
</feature>
<feature type="binding site" evidence="1">
    <location>
        <position position="38"/>
    </location>
    <ligand>
        <name>substrate</name>
    </ligand>
</feature>
<feature type="binding site" evidence="1">
    <location>
        <begin position="61"/>
        <end position="64"/>
    </location>
    <ligand>
        <name>substrate</name>
    </ligand>
</feature>
<feature type="binding site" evidence="1">
    <location>
        <position position="119"/>
    </location>
    <ligand>
        <name>substrate</name>
    </ligand>
</feature>
<feature type="binding site" evidence="1">
    <location>
        <position position="152"/>
    </location>
    <ligand>
        <name>substrate</name>
    </ligand>
</feature>
<feature type="binding site" evidence="1">
    <location>
        <position position="205"/>
    </location>
    <ligand>
        <name>ATP</name>
        <dbReference type="ChEBI" id="CHEBI:30616"/>
    </ligand>
</feature>
<feature type="binding site" evidence="1">
    <location>
        <position position="296"/>
    </location>
    <ligand>
        <name>ATP</name>
        <dbReference type="ChEBI" id="CHEBI:30616"/>
    </ligand>
</feature>
<feature type="binding site" evidence="1">
    <location>
        <position position="327"/>
    </location>
    <ligand>
        <name>ATP</name>
        <dbReference type="ChEBI" id="CHEBI:30616"/>
    </ligand>
</feature>
<feature type="binding site" evidence="1">
    <location>
        <begin position="353"/>
        <end position="356"/>
    </location>
    <ligand>
        <name>ATP</name>
        <dbReference type="ChEBI" id="CHEBI:30616"/>
    </ligand>
</feature>
<dbReference type="EC" id="2.7.2.3" evidence="1"/>
<dbReference type="EMBL" id="AP009178">
    <property type="protein sequence ID" value="BAF70598.1"/>
    <property type="molecule type" value="Genomic_DNA"/>
</dbReference>
<dbReference type="SMR" id="A6Q539"/>
<dbReference type="FunCoup" id="A6Q539">
    <property type="interactions" value="410"/>
</dbReference>
<dbReference type="STRING" id="387092.NIS_1491"/>
<dbReference type="KEGG" id="nis:NIS_1491"/>
<dbReference type="eggNOG" id="COG0126">
    <property type="taxonomic scope" value="Bacteria"/>
</dbReference>
<dbReference type="HOGENOM" id="CLU_025427_0_2_7"/>
<dbReference type="InParanoid" id="A6Q539"/>
<dbReference type="OrthoDB" id="9808460at2"/>
<dbReference type="UniPathway" id="UPA00109">
    <property type="reaction ID" value="UER00185"/>
</dbReference>
<dbReference type="Proteomes" id="UP000001118">
    <property type="component" value="Chromosome"/>
</dbReference>
<dbReference type="GO" id="GO:0005829">
    <property type="term" value="C:cytosol"/>
    <property type="evidence" value="ECO:0007669"/>
    <property type="project" value="TreeGrafter"/>
</dbReference>
<dbReference type="GO" id="GO:0043531">
    <property type="term" value="F:ADP binding"/>
    <property type="evidence" value="ECO:0007669"/>
    <property type="project" value="TreeGrafter"/>
</dbReference>
<dbReference type="GO" id="GO:0005524">
    <property type="term" value="F:ATP binding"/>
    <property type="evidence" value="ECO:0007669"/>
    <property type="project" value="UniProtKB-KW"/>
</dbReference>
<dbReference type="GO" id="GO:0004618">
    <property type="term" value="F:phosphoglycerate kinase activity"/>
    <property type="evidence" value="ECO:0007669"/>
    <property type="project" value="UniProtKB-UniRule"/>
</dbReference>
<dbReference type="GO" id="GO:0006094">
    <property type="term" value="P:gluconeogenesis"/>
    <property type="evidence" value="ECO:0007669"/>
    <property type="project" value="TreeGrafter"/>
</dbReference>
<dbReference type="GO" id="GO:0006096">
    <property type="term" value="P:glycolytic process"/>
    <property type="evidence" value="ECO:0007669"/>
    <property type="project" value="UniProtKB-UniRule"/>
</dbReference>
<dbReference type="CDD" id="cd00318">
    <property type="entry name" value="Phosphoglycerate_kinase"/>
    <property type="match status" value="1"/>
</dbReference>
<dbReference type="FunFam" id="3.40.50.1260:FF:000003">
    <property type="entry name" value="Phosphoglycerate kinase"/>
    <property type="match status" value="1"/>
</dbReference>
<dbReference type="FunFam" id="3.40.50.1260:FF:000006">
    <property type="entry name" value="Phosphoglycerate kinase"/>
    <property type="match status" value="1"/>
</dbReference>
<dbReference type="Gene3D" id="3.40.50.1260">
    <property type="entry name" value="Phosphoglycerate kinase, N-terminal domain"/>
    <property type="match status" value="2"/>
</dbReference>
<dbReference type="HAMAP" id="MF_00145">
    <property type="entry name" value="Phosphoglyc_kinase"/>
    <property type="match status" value="1"/>
</dbReference>
<dbReference type="InterPro" id="IPR001576">
    <property type="entry name" value="Phosphoglycerate_kinase"/>
</dbReference>
<dbReference type="InterPro" id="IPR015824">
    <property type="entry name" value="Phosphoglycerate_kinase_N"/>
</dbReference>
<dbReference type="InterPro" id="IPR036043">
    <property type="entry name" value="Phosphoglycerate_kinase_sf"/>
</dbReference>
<dbReference type="PANTHER" id="PTHR11406">
    <property type="entry name" value="PHOSPHOGLYCERATE KINASE"/>
    <property type="match status" value="1"/>
</dbReference>
<dbReference type="PANTHER" id="PTHR11406:SF23">
    <property type="entry name" value="PHOSPHOGLYCERATE KINASE 1, CHLOROPLASTIC-RELATED"/>
    <property type="match status" value="1"/>
</dbReference>
<dbReference type="Pfam" id="PF00162">
    <property type="entry name" value="PGK"/>
    <property type="match status" value="1"/>
</dbReference>
<dbReference type="PIRSF" id="PIRSF000724">
    <property type="entry name" value="Pgk"/>
    <property type="match status" value="1"/>
</dbReference>
<dbReference type="PRINTS" id="PR00477">
    <property type="entry name" value="PHGLYCKINASE"/>
</dbReference>
<dbReference type="SUPFAM" id="SSF53748">
    <property type="entry name" value="Phosphoglycerate kinase"/>
    <property type="match status" value="1"/>
</dbReference>
<protein>
    <recommendedName>
        <fullName evidence="1">Phosphoglycerate kinase</fullName>
        <ecNumber evidence="1">2.7.2.3</ecNumber>
    </recommendedName>
</protein>
<reference key="1">
    <citation type="journal article" date="2007" name="Proc. Natl. Acad. Sci. U.S.A.">
        <title>Deep-sea vent epsilon-proteobacterial genomes provide insights into emergence of pathogens.</title>
        <authorList>
            <person name="Nakagawa S."/>
            <person name="Takaki Y."/>
            <person name="Shimamura S."/>
            <person name="Reysenbach A.-L."/>
            <person name="Takai K."/>
            <person name="Horikoshi K."/>
        </authorList>
    </citation>
    <scope>NUCLEOTIDE SEQUENCE [LARGE SCALE GENOMIC DNA]</scope>
    <source>
        <strain>SB155-2</strain>
    </source>
</reference>
<proteinExistence type="inferred from homology"/>
<organism>
    <name type="scientific">Nitratiruptor sp. (strain SB155-2)</name>
    <dbReference type="NCBI Taxonomy" id="387092"/>
    <lineage>
        <taxon>Bacteria</taxon>
        <taxon>Pseudomonadati</taxon>
        <taxon>Campylobacterota</taxon>
        <taxon>Epsilonproteobacteria</taxon>
        <taxon>Nautiliales</taxon>
        <taxon>Nitratiruptoraceae</taxon>
        <taxon>Nitratiruptor</taxon>
    </lineage>
</organism>
<gene>
    <name evidence="1" type="primary">pgk</name>
    <name type="ordered locus">NIS_1491</name>
</gene>
<evidence type="ECO:0000255" key="1">
    <source>
        <dbReference type="HAMAP-Rule" id="MF_00145"/>
    </source>
</evidence>
<name>PGK_NITSB</name>
<accession>A6Q539</accession>
<comment type="catalytic activity">
    <reaction evidence="1">
        <text>(2R)-3-phosphoglycerate + ATP = (2R)-3-phospho-glyceroyl phosphate + ADP</text>
        <dbReference type="Rhea" id="RHEA:14801"/>
        <dbReference type="ChEBI" id="CHEBI:30616"/>
        <dbReference type="ChEBI" id="CHEBI:57604"/>
        <dbReference type="ChEBI" id="CHEBI:58272"/>
        <dbReference type="ChEBI" id="CHEBI:456216"/>
        <dbReference type="EC" id="2.7.2.3"/>
    </reaction>
</comment>
<comment type="pathway">
    <text evidence="1">Carbohydrate degradation; glycolysis; pyruvate from D-glyceraldehyde 3-phosphate: step 2/5.</text>
</comment>
<comment type="subunit">
    <text evidence="1">Monomer.</text>
</comment>
<comment type="subcellular location">
    <subcellularLocation>
        <location evidence="1">Cytoplasm</location>
    </subcellularLocation>
</comment>
<comment type="similarity">
    <text evidence="1">Belongs to the phosphoglycerate kinase family.</text>
</comment>
<keyword id="KW-0067">ATP-binding</keyword>
<keyword id="KW-0963">Cytoplasm</keyword>
<keyword id="KW-0324">Glycolysis</keyword>
<keyword id="KW-0418">Kinase</keyword>
<keyword id="KW-0547">Nucleotide-binding</keyword>
<keyword id="KW-1185">Reference proteome</keyword>
<keyword id="KW-0808">Transferase</keyword>